<sequence length="147" mass="15933">MVHLTPEEKAAVAALWGKVNVDEVGGEALGRLLVVYPWTQRFFESFGDLSTPAAVMGNPKVKAHGKKVLGAFSDGLAHLDNLKGTFAQLSELHCDKLHVDPENFRLLGNVLVCVLARNFGKEFTPQVQAAFQKVVAGVATALAHKYH</sequence>
<feature type="initiator methionine" description="Removed" evidence="2">
    <location>
        <position position="1"/>
    </location>
</feature>
<feature type="chain" id="PRO_0000053162" description="Hemoglobin subunit delta">
    <location>
        <begin position="2"/>
        <end position="147"/>
    </location>
</feature>
<feature type="domain" description="Globin" evidence="1">
    <location>
        <begin position="3"/>
        <end position="147"/>
    </location>
</feature>
<feature type="binding site" description="distal binding residue">
    <location>
        <position position="64"/>
    </location>
    <ligand>
        <name>heme b</name>
        <dbReference type="ChEBI" id="CHEBI:60344"/>
    </ligand>
    <ligandPart>
        <name>Fe</name>
        <dbReference type="ChEBI" id="CHEBI:18248"/>
    </ligandPart>
</feature>
<feature type="binding site" description="proximal binding residue">
    <location>
        <position position="93"/>
    </location>
    <ligand>
        <name>heme b</name>
        <dbReference type="ChEBI" id="CHEBI:60344"/>
    </ligand>
    <ligandPart>
        <name>Fe</name>
        <dbReference type="ChEBI" id="CHEBI:18248"/>
    </ligandPart>
</feature>
<feature type="sequence variant" description="In allelic sequence.">
    <original>E</original>
    <variation>K</variation>
    <location>
        <position position="7"/>
    </location>
</feature>
<feature type="sequence variant" description="In allelic sequence.">
    <original>A</original>
    <variation>S</variation>
    <location>
        <position position="10"/>
    </location>
</feature>
<feature type="sequence variant" description="In allelic sequence.">
    <original>G</original>
    <variation>D</variation>
    <location>
        <position position="70"/>
    </location>
</feature>
<feature type="sequence conflict" description="In Ref. 2; AA sequence." evidence="3" ref="2">
    <original>P</original>
    <variation>G</variation>
    <location>
        <position position="6"/>
    </location>
</feature>
<feature type="sequence conflict" description="In Ref. 2; AA sequence." evidence="3" ref="2">
    <original>D</original>
    <variation>A</variation>
    <location>
        <position position="48"/>
    </location>
</feature>
<feature type="sequence conflict" description="In Ref. 2; AA sequence." evidence="3" ref="2">
    <original>A</original>
    <variation>D</variation>
    <location>
        <position position="53"/>
    </location>
</feature>
<name>HBD_ATEGE</name>
<comment type="subunit">
    <text>Heterotetramer of two delta chains and two alpha chains.</text>
</comment>
<comment type="tissue specificity">
    <text>Red blood cells.</text>
</comment>
<comment type="similarity">
    <text evidence="1">Belongs to the globin family.</text>
</comment>
<dbReference type="EMBL" id="M19061">
    <property type="protein sequence ID" value="AAB00793.1"/>
    <property type="molecule type" value="Genomic_DNA"/>
</dbReference>
<dbReference type="PIR" id="A31523">
    <property type="entry name" value="HDMKP"/>
</dbReference>
<dbReference type="SMR" id="P02044"/>
<dbReference type="GO" id="GO:0072562">
    <property type="term" value="C:blood microparticle"/>
    <property type="evidence" value="ECO:0007669"/>
    <property type="project" value="TreeGrafter"/>
</dbReference>
<dbReference type="GO" id="GO:0031838">
    <property type="term" value="C:haptoglobin-hemoglobin complex"/>
    <property type="evidence" value="ECO:0007669"/>
    <property type="project" value="TreeGrafter"/>
</dbReference>
<dbReference type="GO" id="GO:0005833">
    <property type="term" value="C:hemoglobin complex"/>
    <property type="evidence" value="ECO:0007669"/>
    <property type="project" value="InterPro"/>
</dbReference>
<dbReference type="GO" id="GO:0031720">
    <property type="term" value="F:haptoglobin binding"/>
    <property type="evidence" value="ECO:0007669"/>
    <property type="project" value="TreeGrafter"/>
</dbReference>
<dbReference type="GO" id="GO:0020037">
    <property type="term" value="F:heme binding"/>
    <property type="evidence" value="ECO:0007669"/>
    <property type="project" value="InterPro"/>
</dbReference>
<dbReference type="GO" id="GO:0031721">
    <property type="term" value="F:hemoglobin alpha binding"/>
    <property type="evidence" value="ECO:0007669"/>
    <property type="project" value="TreeGrafter"/>
</dbReference>
<dbReference type="GO" id="GO:0046872">
    <property type="term" value="F:metal ion binding"/>
    <property type="evidence" value="ECO:0007669"/>
    <property type="project" value="UniProtKB-KW"/>
</dbReference>
<dbReference type="GO" id="GO:0043177">
    <property type="term" value="F:organic acid binding"/>
    <property type="evidence" value="ECO:0007669"/>
    <property type="project" value="TreeGrafter"/>
</dbReference>
<dbReference type="GO" id="GO:0019825">
    <property type="term" value="F:oxygen binding"/>
    <property type="evidence" value="ECO:0007669"/>
    <property type="project" value="InterPro"/>
</dbReference>
<dbReference type="GO" id="GO:0005344">
    <property type="term" value="F:oxygen carrier activity"/>
    <property type="evidence" value="ECO:0007669"/>
    <property type="project" value="UniProtKB-KW"/>
</dbReference>
<dbReference type="GO" id="GO:0004601">
    <property type="term" value="F:peroxidase activity"/>
    <property type="evidence" value="ECO:0007669"/>
    <property type="project" value="TreeGrafter"/>
</dbReference>
<dbReference type="GO" id="GO:0042744">
    <property type="term" value="P:hydrogen peroxide catabolic process"/>
    <property type="evidence" value="ECO:0007669"/>
    <property type="project" value="TreeGrafter"/>
</dbReference>
<dbReference type="CDD" id="cd08925">
    <property type="entry name" value="Hb-beta-like"/>
    <property type="match status" value="1"/>
</dbReference>
<dbReference type="FunFam" id="1.10.490.10:FF:000001">
    <property type="entry name" value="Hemoglobin subunit beta"/>
    <property type="match status" value="1"/>
</dbReference>
<dbReference type="Gene3D" id="1.10.490.10">
    <property type="entry name" value="Globins"/>
    <property type="match status" value="1"/>
</dbReference>
<dbReference type="InterPro" id="IPR000971">
    <property type="entry name" value="Globin"/>
</dbReference>
<dbReference type="InterPro" id="IPR009050">
    <property type="entry name" value="Globin-like_sf"/>
</dbReference>
<dbReference type="InterPro" id="IPR012292">
    <property type="entry name" value="Globin/Proto"/>
</dbReference>
<dbReference type="InterPro" id="IPR002337">
    <property type="entry name" value="Hemoglobin_b"/>
</dbReference>
<dbReference type="InterPro" id="IPR050056">
    <property type="entry name" value="Hemoglobin_oxygen_transport"/>
</dbReference>
<dbReference type="PANTHER" id="PTHR11442">
    <property type="entry name" value="HEMOGLOBIN FAMILY MEMBER"/>
    <property type="match status" value="1"/>
</dbReference>
<dbReference type="PANTHER" id="PTHR11442:SF42">
    <property type="entry name" value="HEMOGLOBIN SUBUNIT BETA"/>
    <property type="match status" value="1"/>
</dbReference>
<dbReference type="Pfam" id="PF00042">
    <property type="entry name" value="Globin"/>
    <property type="match status" value="1"/>
</dbReference>
<dbReference type="PRINTS" id="PR00814">
    <property type="entry name" value="BETAHAEM"/>
</dbReference>
<dbReference type="SUPFAM" id="SSF46458">
    <property type="entry name" value="Globin-like"/>
    <property type="match status" value="1"/>
</dbReference>
<dbReference type="PROSITE" id="PS01033">
    <property type="entry name" value="GLOBIN"/>
    <property type="match status" value="1"/>
</dbReference>
<evidence type="ECO:0000255" key="1">
    <source>
        <dbReference type="PROSITE-ProRule" id="PRU00238"/>
    </source>
</evidence>
<evidence type="ECO:0000269" key="2">
    <source>
    </source>
</evidence>
<evidence type="ECO:0000305" key="3"/>
<accession>P02044</accession>
<proteinExistence type="evidence at protein level"/>
<gene>
    <name type="primary">HBD</name>
</gene>
<organism>
    <name type="scientific">Ateles geoffroyi</name>
    <name type="common">Black-handed spider monkey</name>
    <name type="synonym">Geoffroy's spider monkey</name>
    <dbReference type="NCBI Taxonomy" id="9509"/>
    <lineage>
        <taxon>Eukaryota</taxon>
        <taxon>Metazoa</taxon>
        <taxon>Chordata</taxon>
        <taxon>Craniata</taxon>
        <taxon>Vertebrata</taxon>
        <taxon>Euteleostomi</taxon>
        <taxon>Mammalia</taxon>
        <taxon>Eutheria</taxon>
        <taxon>Euarchontoglires</taxon>
        <taxon>Primates</taxon>
        <taxon>Haplorrhini</taxon>
        <taxon>Platyrrhini</taxon>
        <taxon>Atelidae</taxon>
        <taxon>Atelinae</taxon>
        <taxon>Ateles</taxon>
    </lineage>
</organism>
<protein>
    <recommendedName>
        <fullName>Hemoglobin subunit delta</fullName>
    </recommendedName>
    <alternativeName>
        <fullName>Delta-globin</fullName>
    </alternativeName>
    <alternativeName>
        <fullName>Hemoglobin delta chain</fullName>
    </alternativeName>
</protein>
<keyword id="KW-0903">Direct protein sequencing</keyword>
<keyword id="KW-0349">Heme</keyword>
<keyword id="KW-0408">Iron</keyword>
<keyword id="KW-0479">Metal-binding</keyword>
<keyword id="KW-0561">Oxygen transport</keyword>
<keyword id="KW-0813">Transport</keyword>
<reference key="1">
    <citation type="journal article" date="1988" name="Mol. Biol. Evol.">
        <title>The structure and evolution of the spider monkey delta-globin gene.</title>
        <authorList>
            <person name="Spritz R.A."/>
            <person name="Giebel L.B."/>
        </authorList>
    </citation>
    <scope>NUCLEOTIDE SEQUENCE [GENOMIC DNA]</scope>
</reference>
<reference key="2">
    <citation type="journal article" date="1971" name="Biochem. Genet.">
        <title>Primate hemoglobins: some sequences and some proposals concerning the character of evolution and mutation.</title>
        <authorList>
            <person name="Boyer S.H."/>
            <person name="Crosby E.F."/>
            <person name="Noyes A.N."/>
            <person name="Fuller G.F."/>
            <person name="Leslie S.E."/>
            <person name="Donaldson L.J."/>
            <person name="Vrablik G.R."/>
            <person name="Schaefer E.W. Jr."/>
            <person name="Thurmon T.F."/>
        </authorList>
    </citation>
    <scope>PROTEIN SEQUENCE OF 2-147</scope>
</reference>